<gene>
    <name type="primary">rps2</name>
</gene>
<feature type="chain" id="PRO_0000352140" description="Small ribosomal subunit protein uS2c">
    <location>
        <begin position="1"/>
        <end position="236"/>
    </location>
</feature>
<dbReference type="EMBL" id="EU262890">
    <property type="protein sequence ID" value="ABX10039.1"/>
    <property type="molecule type" value="Genomic_DNA"/>
</dbReference>
<dbReference type="RefSeq" id="YP_001687285.1">
    <property type="nucleotide sequence ID" value="NC_010360.2"/>
</dbReference>
<dbReference type="SMR" id="B0Z546"/>
<dbReference type="GeneID" id="5955331"/>
<dbReference type="GO" id="GO:0009507">
    <property type="term" value="C:chloroplast"/>
    <property type="evidence" value="ECO:0007669"/>
    <property type="project" value="UniProtKB-SubCell"/>
</dbReference>
<dbReference type="GO" id="GO:0005763">
    <property type="term" value="C:mitochondrial small ribosomal subunit"/>
    <property type="evidence" value="ECO:0007669"/>
    <property type="project" value="TreeGrafter"/>
</dbReference>
<dbReference type="GO" id="GO:0003735">
    <property type="term" value="F:structural constituent of ribosome"/>
    <property type="evidence" value="ECO:0007669"/>
    <property type="project" value="InterPro"/>
</dbReference>
<dbReference type="GO" id="GO:0006412">
    <property type="term" value="P:translation"/>
    <property type="evidence" value="ECO:0007669"/>
    <property type="project" value="UniProtKB-UniRule"/>
</dbReference>
<dbReference type="CDD" id="cd01425">
    <property type="entry name" value="RPS2"/>
    <property type="match status" value="1"/>
</dbReference>
<dbReference type="FunFam" id="1.10.287.610:FF:000001">
    <property type="entry name" value="30S ribosomal protein S2"/>
    <property type="match status" value="1"/>
</dbReference>
<dbReference type="Gene3D" id="3.40.50.10490">
    <property type="entry name" value="Glucose-6-phosphate isomerase like protein, domain 1"/>
    <property type="match status" value="1"/>
</dbReference>
<dbReference type="Gene3D" id="1.10.287.610">
    <property type="entry name" value="Helix hairpin bin"/>
    <property type="match status" value="1"/>
</dbReference>
<dbReference type="HAMAP" id="MF_00291_B">
    <property type="entry name" value="Ribosomal_uS2_B"/>
    <property type="match status" value="1"/>
</dbReference>
<dbReference type="InterPro" id="IPR001865">
    <property type="entry name" value="Ribosomal_uS2"/>
</dbReference>
<dbReference type="InterPro" id="IPR005706">
    <property type="entry name" value="Ribosomal_uS2_bac/mit/plastid"/>
</dbReference>
<dbReference type="InterPro" id="IPR018130">
    <property type="entry name" value="Ribosomal_uS2_CS"/>
</dbReference>
<dbReference type="InterPro" id="IPR023591">
    <property type="entry name" value="Ribosomal_uS2_flav_dom_sf"/>
</dbReference>
<dbReference type="NCBIfam" id="TIGR01011">
    <property type="entry name" value="rpsB_bact"/>
    <property type="match status" value="1"/>
</dbReference>
<dbReference type="PANTHER" id="PTHR12534">
    <property type="entry name" value="30S RIBOSOMAL PROTEIN S2 PROKARYOTIC AND ORGANELLAR"/>
    <property type="match status" value="1"/>
</dbReference>
<dbReference type="PANTHER" id="PTHR12534:SF0">
    <property type="entry name" value="SMALL RIBOSOMAL SUBUNIT PROTEIN US2M"/>
    <property type="match status" value="1"/>
</dbReference>
<dbReference type="Pfam" id="PF00318">
    <property type="entry name" value="Ribosomal_S2"/>
    <property type="match status" value="1"/>
</dbReference>
<dbReference type="PRINTS" id="PR00395">
    <property type="entry name" value="RIBOSOMALS2"/>
</dbReference>
<dbReference type="SUPFAM" id="SSF52313">
    <property type="entry name" value="Ribosomal protein S2"/>
    <property type="match status" value="1"/>
</dbReference>
<dbReference type="PROSITE" id="PS00962">
    <property type="entry name" value="RIBOSOMAL_S2_1"/>
    <property type="match status" value="1"/>
</dbReference>
<dbReference type="PROSITE" id="PS00963">
    <property type="entry name" value="RIBOSOMAL_S2_2"/>
    <property type="match status" value="1"/>
</dbReference>
<protein>
    <recommendedName>
        <fullName evidence="1">Small ribosomal subunit protein uS2c</fullName>
    </recommendedName>
    <alternativeName>
        <fullName>30S ribosomal protein S2, chloroplastic</fullName>
    </alternativeName>
</protein>
<reference key="1">
    <citation type="journal article" date="2008" name="Nucleic Acids Res.">
        <title>The complete nucleotide sequences of the five genetically distinct plastid genomes of Oenothera, subsection Oenothera: I. Sequence evaluation and plastome evolution.</title>
        <authorList>
            <person name="Greiner S."/>
            <person name="Wang X."/>
            <person name="Rauwolf U."/>
            <person name="Silber M.V."/>
            <person name="Mayer K."/>
            <person name="Meurer J."/>
            <person name="Haberer G."/>
            <person name="Herrmann R.G."/>
        </authorList>
    </citation>
    <scope>NUCLEOTIDE SEQUENCE [LARGE SCALE GENOMIC DNA]</scope>
    <source>
        <strain>cv. Rr-lamarckiana Sweden</strain>
    </source>
</reference>
<accession>B0Z546</accession>
<proteinExistence type="inferred from homology"/>
<name>RR2_OENGL</name>
<keyword id="KW-0150">Chloroplast</keyword>
<keyword id="KW-0934">Plastid</keyword>
<keyword id="KW-0687">Ribonucleoprotein</keyword>
<keyword id="KW-0689">Ribosomal protein</keyword>
<sequence>MTRRYWNINLEEMMEAGVHFGHGIKKWNPRMAPYIYANRKGIHITNLTKTARFLAEACDLVFDAASRGGQFLIVGTKKQAAALVARAAIKARCHYVNKKWLGGMLTNWSTTETRLHQFRDLRTEQKTGRLNRLPKRDAAILKRQLSHLQTYLGGIKYMTGLPDILIILDQQEEYTALRECITLGIPTICLIDTDCDPDLADLPIPANDDAMASIRLILNKLVFAICEGRSSSIRNP</sequence>
<organism>
    <name type="scientific">Oenothera glazioviana</name>
    <name type="common">Large-flowered evening primrose</name>
    <name type="synonym">Oenothera erythrosepala</name>
    <dbReference type="NCBI Taxonomy" id="482428"/>
    <lineage>
        <taxon>Eukaryota</taxon>
        <taxon>Viridiplantae</taxon>
        <taxon>Streptophyta</taxon>
        <taxon>Embryophyta</taxon>
        <taxon>Tracheophyta</taxon>
        <taxon>Spermatophyta</taxon>
        <taxon>Magnoliopsida</taxon>
        <taxon>eudicotyledons</taxon>
        <taxon>Gunneridae</taxon>
        <taxon>Pentapetalae</taxon>
        <taxon>rosids</taxon>
        <taxon>malvids</taxon>
        <taxon>Myrtales</taxon>
        <taxon>Onagraceae</taxon>
        <taxon>Onagroideae</taxon>
        <taxon>Onagreae</taxon>
        <taxon>Oenothera</taxon>
    </lineage>
</organism>
<evidence type="ECO:0000305" key="1"/>
<geneLocation type="chloroplast"/>
<comment type="subcellular location">
    <subcellularLocation>
        <location>Plastid</location>
        <location>Chloroplast</location>
    </subcellularLocation>
</comment>
<comment type="similarity">
    <text evidence="1">Belongs to the universal ribosomal protein uS2 family.</text>
</comment>